<sequence length="181" mass="21049">MAQDTNNLIWLDMEMTGLNPDQDRIIEVAMIVTDSNLNVLAESPVLVIHQPDAILDGMDDWNKNTHGKSGLIEKVKNSTVSEAEAEQLLLEFMMQHVPERATPMCGNTIHQDRRFMARWMPKLEAYFHYRNLDVSTLKELCKRWRPEIAKGVVKRGKHEALADILESIEEMRYYREHFLKV</sequence>
<name>ORN_CHRVO</name>
<organism>
    <name type="scientific">Chromobacterium violaceum (strain ATCC 12472 / DSM 30191 / JCM 1249 / CCUG 213 / NBRC 12614 / NCIMB 9131 / NCTC 9757 / MK)</name>
    <dbReference type="NCBI Taxonomy" id="243365"/>
    <lineage>
        <taxon>Bacteria</taxon>
        <taxon>Pseudomonadati</taxon>
        <taxon>Pseudomonadota</taxon>
        <taxon>Betaproteobacteria</taxon>
        <taxon>Neisseriales</taxon>
        <taxon>Chromobacteriaceae</taxon>
        <taxon>Chromobacterium</taxon>
    </lineage>
</organism>
<evidence type="ECO:0000255" key="1">
    <source>
        <dbReference type="HAMAP-Rule" id="MF_00045"/>
    </source>
</evidence>
<keyword id="KW-0963">Cytoplasm</keyword>
<keyword id="KW-0269">Exonuclease</keyword>
<keyword id="KW-0378">Hydrolase</keyword>
<keyword id="KW-0540">Nuclease</keyword>
<keyword id="KW-1185">Reference proteome</keyword>
<reference key="1">
    <citation type="journal article" date="2003" name="Proc. Natl. Acad. Sci. U.S.A.">
        <title>The complete genome sequence of Chromobacterium violaceum reveals remarkable and exploitable bacterial adaptability.</title>
        <authorList>
            <person name="Vasconcelos A.T.R."/>
            <person name="de Almeida D.F."/>
            <person name="Hungria M."/>
            <person name="Guimaraes C.T."/>
            <person name="Antonio R.V."/>
            <person name="Almeida F.C."/>
            <person name="de Almeida L.G.P."/>
            <person name="de Almeida R."/>
            <person name="Alves-Gomes J.A."/>
            <person name="Andrade E.M."/>
            <person name="Araripe J."/>
            <person name="de Araujo M.F.F."/>
            <person name="Astolfi-Filho S."/>
            <person name="Azevedo V."/>
            <person name="Baptista A.J."/>
            <person name="Bataus L.A.M."/>
            <person name="Batista J.S."/>
            <person name="Belo A."/>
            <person name="van den Berg C."/>
            <person name="Bogo M."/>
            <person name="Bonatto S."/>
            <person name="Bordignon J."/>
            <person name="Brigido M.M."/>
            <person name="Brito C.A."/>
            <person name="Brocchi M."/>
            <person name="Burity H.A."/>
            <person name="Camargo A.A."/>
            <person name="Cardoso D.D.P."/>
            <person name="Carneiro N.P."/>
            <person name="Carraro D.M."/>
            <person name="Carvalho C.M.B."/>
            <person name="Cascardo J.C.M."/>
            <person name="Cavada B.S."/>
            <person name="Chueire L.M.O."/>
            <person name="Creczynski-Pasa T.B."/>
            <person name="Cunha-Junior N.C."/>
            <person name="Fagundes N."/>
            <person name="Falcao C.L."/>
            <person name="Fantinatti F."/>
            <person name="Farias I.P."/>
            <person name="Felipe M.S.S."/>
            <person name="Ferrari L.P."/>
            <person name="Ferro J.A."/>
            <person name="Ferro M.I.T."/>
            <person name="Franco G.R."/>
            <person name="Freitas N.S.A."/>
            <person name="Furlan L.R."/>
            <person name="Gazzinelli R.T."/>
            <person name="Gomes E.A."/>
            <person name="Goncalves P.R."/>
            <person name="Grangeiro T.B."/>
            <person name="Grattapaglia D."/>
            <person name="Grisard E.C."/>
            <person name="Hanna E.S."/>
            <person name="Jardim S.N."/>
            <person name="Laurino J."/>
            <person name="Leoi L.C.T."/>
            <person name="Lima L.F.A."/>
            <person name="Loureiro M.F."/>
            <person name="Lyra M.C.C.P."/>
            <person name="Madeira H.M.F."/>
            <person name="Manfio G.P."/>
            <person name="Maranhao A.Q."/>
            <person name="Martins W.S."/>
            <person name="di Mauro S.M.Z."/>
            <person name="de Medeiros S.R.B."/>
            <person name="Meissner R.V."/>
            <person name="Moreira M.A.M."/>
            <person name="Nascimento F.F."/>
            <person name="Nicolas M.F."/>
            <person name="Oliveira J.G."/>
            <person name="Oliveira S.C."/>
            <person name="Paixao R.F.C."/>
            <person name="Parente J.A."/>
            <person name="Pedrosa F.O."/>
            <person name="Pena S.D.J."/>
            <person name="Pereira J.O."/>
            <person name="Pereira M."/>
            <person name="Pinto L.S.R.C."/>
            <person name="Pinto L.S."/>
            <person name="Porto J.I.R."/>
            <person name="Potrich D.P."/>
            <person name="Ramalho-Neto C.E."/>
            <person name="Reis A.M.M."/>
            <person name="Rigo L.U."/>
            <person name="Rondinelli E."/>
            <person name="Santos E.B.P."/>
            <person name="Santos F.R."/>
            <person name="Schneider M.P.C."/>
            <person name="Seuanez H.N."/>
            <person name="Silva A.M.R."/>
            <person name="da Silva A.L.C."/>
            <person name="Silva D.W."/>
            <person name="Silva R."/>
            <person name="Simoes I.C."/>
            <person name="Simon D."/>
            <person name="Soares C.M.A."/>
            <person name="Soares R.B.A."/>
            <person name="Souza E.M."/>
            <person name="Souza K.R.L."/>
            <person name="Souza R.C."/>
            <person name="Steffens M.B.R."/>
            <person name="Steindel M."/>
            <person name="Teixeira S.R."/>
            <person name="Urmenyi T."/>
            <person name="Vettore A."/>
            <person name="Wassem R."/>
            <person name="Zaha A."/>
            <person name="Simpson A.J.G."/>
        </authorList>
    </citation>
    <scope>NUCLEOTIDE SEQUENCE [LARGE SCALE GENOMIC DNA]</scope>
    <source>
        <strain>ATCC 12472 / DSM 30191 / JCM 1249 / CCUG 213 / NBRC 12614 / NCIMB 9131 / NCTC 9757 / MK</strain>
    </source>
</reference>
<gene>
    <name evidence="1" type="primary">orn</name>
    <name type="ordered locus">CV_2368</name>
</gene>
<accession>Q7NVH5</accession>
<protein>
    <recommendedName>
        <fullName evidence="1">Oligoribonuclease</fullName>
        <ecNumber evidence="1">3.1.15.-</ecNumber>
    </recommendedName>
</protein>
<comment type="function">
    <text evidence="1">3'-to-5' exoribonuclease specific for small oligoribonucleotides.</text>
</comment>
<comment type="subcellular location">
    <subcellularLocation>
        <location evidence="1">Cytoplasm</location>
    </subcellularLocation>
</comment>
<comment type="similarity">
    <text evidence="1">Belongs to the oligoribonuclease family.</text>
</comment>
<dbReference type="EC" id="3.1.15.-" evidence="1"/>
<dbReference type="EMBL" id="AE016825">
    <property type="protein sequence ID" value="AAQ60040.1"/>
    <property type="molecule type" value="Genomic_DNA"/>
</dbReference>
<dbReference type="RefSeq" id="WP_011135915.1">
    <property type="nucleotide sequence ID" value="NC_005085.1"/>
</dbReference>
<dbReference type="SMR" id="Q7NVH5"/>
<dbReference type="STRING" id="243365.CV_2368"/>
<dbReference type="GeneID" id="66368021"/>
<dbReference type="KEGG" id="cvi:CV_2368"/>
<dbReference type="eggNOG" id="COG1949">
    <property type="taxonomic scope" value="Bacteria"/>
</dbReference>
<dbReference type="HOGENOM" id="CLU_064761_2_0_4"/>
<dbReference type="OrthoDB" id="9801329at2"/>
<dbReference type="Proteomes" id="UP000001424">
    <property type="component" value="Chromosome"/>
</dbReference>
<dbReference type="GO" id="GO:0005737">
    <property type="term" value="C:cytoplasm"/>
    <property type="evidence" value="ECO:0007669"/>
    <property type="project" value="UniProtKB-SubCell"/>
</dbReference>
<dbReference type="GO" id="GO:0000175">
    <property type="term" value="F:3'-5'-RNA exonuclease activity"/>
    <property type="evidence" value="ECO:0007669"/>
    <property type="project" value="InterPro"/>
</dbReference>
<dbReference type="GO" id="GO:0003676">
    <property type="term" value="F:nucleic acid binding"/>
    <property type="evidence" value="ECO:0007669"/>
    <property type="project" value="InterPro"/>
</dbReference>
<dbReference type="GO" id="GO:0006259">
    <property type="term" value="P:DNA metabolic process"/>
    <property type="evidence" value="ECO:0007669"/>
    <property type="project" value="UniProtKB-ARBA"/>
</dbReference>
<dbReference type="CDD" id="cd06135">
    <property type="entry name" value="Orn"/>
    <property type="match status" value="1"/>
</dbReference>
<dbReference type="FunFam" id="3.30.420.10:FF:000003">
    <property type="entry name" value="Oligoribonuclease"/>
    <property type="match status" value="1"/>
</dbReference>
<dbReference type="Gene3D" id="3.30.420.10">
    <property type="entry name" value="Ribonuclease H-like superfamily/Ribonuclease H"/>
    <property type="match status" value="1"/>
</dbReference>
<dbReference type="HAMAP" id="MF_00045">
    <property type="entry name" value="Oligoribonuclease"/>
    <property type="match status" value="1"/>
</dbReference>
<dbReference type="InterPro" id="IPR013520">
    <property type="entry name" value="Exonuclease_RNaseT/DNA_pol3"/>
</dbReference>
<dbReference type="InterPro" id="IPR022894">
    <property type="entry name" value="Oligoribonuclease"/>
</dbReference>
<dbReference type="InterPro" id="IPR012337">
    <property type="entry name" value="RNaseH-like_sf"/>
</dbReference>
<dbReference type="InterPro" id="IPR036397">
    <property type="entry name" value="RNaseH_sf"/>
</dbReference>
<dbReference type="NCBIfam" id="NF003765">
    <property type="entry name" value="PRK05359.1"/>
    <property type="match status" value="1"/>
</dbReference>
<dbReference type="PANTHER" id="PTHR11046">
    <property type="entry name" value="OLIGORIBONUCLEASE, MITOCHONDRIAL"/>
    <property type="match status" value="1"/>
</dbReference>
<dbReference type="PANTHER" id="PTHR11046:SF0">
    <property type="entry name" value="OLIGORIBONUCLEASE, MITOCHONDRIAL"/>
    <property type="match status" value="1"/>
</dbReference>
<dbReference type="Pfam" id="PF00929">
    <property type="entry name" value="RNase_T"/>
    <property type="match status" value="1"/>
</dbReference>
<dbReference type="SMART" id="SM00479">
    <property type="entry name" value="EXOIII"/>
    <property type="match status" value="1"/>
</dbReference>
<dbReference type="SUPFAM" id="SSF53098">
    <property type="entry name" value="Ribonuclease H-like"/>
    <property type="match status" value="1"/>
</dbReference>
<feature type="chain" id="PRO_0000111028" description="Oligoribonuclease">
    <location>
        <begin position="1"/>
        <end position="181"/>
    </location>
</feature>
<feature type="domain" description="Exonuclease" evidence="1">
    <location>
        <begin position="8"/>
        <end position="171"/>
    </location>
</feature>
<feature type="active site" evidence="1">
    <location>
        <position position="129"/>
    </location>
</feature>
<proteinExistence type="inferred from homology"/>